<sequence>MALRACGLIIFRRHLIPKVDNTTIEFLLLQASDGIHHWTPPKGHVDPGENDLETALRETQEETGIEASQLIVLEGFRRELNYVARKKPKTVIYWLAEVKDYDVEIRLSQEHQAYRWLGLDEACQLAQFEEMKATLQEGHQFLCSTPA</sequence>
<name>AP4A_RAT</name>
<protein>
    <recommendedName>
        <fullName>Bis(5'-nucleosyl)-tetraphosphatase [asymmetrical]</fullName>
        <ecNumber evidence="2">3.6.1.17</ecNumber>
    </recommendedName>
    <alternativeName>
        <fullName>Diadenosine 5',5'''-P1,P4-tetraphosphate asymmetrical hydrolase</fullName>
        <shortName>Ap4A hydrolase</shortName>
        <shortName>Ap4Aase</shortName>
        <shortName>Diadenosine tetraphosphatase</shortName>
    </alternativeName>
    <alternativeName>
        <fullName>Nucleoside diphosphate-linked moiety X motif 2</fullName>
        <shortName>Nudix motif 2</shortName>
    </alternativeName>
</protein>
<gene>
    <name type="primary">Nudt2</name>
</gene>
<proteinExistence type="evidence at transcript level"/>
<organism>
    <name type="scientific">Rattus norvegicus</name>
    <name type="common">Rat</name>
    <dbReference type="NCBI Taxonomy" id="10116"/>
    <lineage>
        <taxon>Eukaryota</taxon>
        <taxon>Metazoa</taxon>
        <taxon>Chordata</taxon>
        <taxon>Craniata</taxon>
        <taxon>Vertebrata</taxon>
        <taxon>Euteleostomi</taxon>
        <taxon>Mammalia</taxon>
        <taxon>Eutheria</taxon>
        <taxon>Euarchontoglires</taxon>
        <taxon>Glires</taxon>
        <taxon>Rodentia</taxon>
        <taxon>Myomorpha</taxon>
        <taxon>Muroidea</taxon>
        <taxon>Muridae</taxon>
        <taxon>Murinae</taxon>
        <taxon>Rattus</taxon>
    </lineage>
</organism>
<dbReference type="EC" id="3.6.1.17" evidence="2"/>
<dbReference type="EMBL" id="BC058156">
    <property type="protein sequence ID" value="AAH58156.1"/>
    <property type="molecule type" value="mRNA"/>
</dbReference>
<dbReference type="RefSeq" id="NP_997479.1">
    <property type="nucleotide sequence ID" value="NM_207596.2"/>
</dbReference>
<dbReference type="RefSeq" id="XP_063143372.1">
    <property type="nucleotide sequence ID" value="XM_063287302.1"/>
</dbReference>
<dbReference type="RefSeq" id="XP_063143373.1">
    <property type="nucleotide sequence ID" value="XM_063287303.1"/>
</dbReference>
<dbReference type="SMR" id="Q6PEC0"/>
<dbReference type="FunCoup" id="Q6PEC0">
    <property type="interactions" value="781"/>
</dbReference>
<dbReference type="STRING" id="10116.ENSRNOP00000017712"/>
<dbReference type="PhosphoSitePlus" id="Q6PEC0"/>
<dbReference type="jPOST" id="Q6PEC0"/>
<dbReference type="PaxDb" id="10116-ENSRNOP00000017712"/>
<dbReference type="Ensembl" id="ENSRNOT00000017712.7">
    <property type="protein sequence ID" value="ENSRNOP00000017712.3"/>
    <property type="gene ID" value="ENSRNOG00000013110.7"/>
</dbReference>
<dbReference type="GeneID" id="297998"/>
<dbReference type="KEGG" id="rno:297998"/>
<dbReference type="UCSC" id="RGD:1303023">
    <property type="organism name" value="rat"/>
</dbReference>
<dbReference type="AGR" id="RGD:1303023"/>
<dbReference type="CTD" id="318"/>
<dbReference type="RGD" id="1303023">
    <property type="gene designation" value="Nudt2"/>
</dbReference>
<dbReference type="eggNOG" id="KOG2839">
    <property type="taxonomic scope" value="Eukaryota"/>
</dbReference>
<dbReference type="GeneTree" id="ENSGT00390000002416"/>
<dbReference type="HOGENOM" id="CLU_037162_14_5_1"/>
<dbReference type="InParanoid" id="Q6PEC0"/>
<dbReference type="OMA" id="WRDYEQA"/>
<dbReference type="OrthoDB" id="276276at2759"/>
<dbReference type="PhylomeDB" id="Q6PEC0"/>
<dbReference type="TreeFam" id="TF105958"/>
<dbReference type="Reactome" id="R-RNO-3299685">
    <property type="pathway name" value="Detoxification of Reactive Oxygen Species"/>
</dbReference>
<dbReference type="PRO" id="PR:Q6PEC0"/>
<dbReference type="Proteomes" id="UP000002494">
    <property type="component" value="Chromosome 5"/>
</dbReference>
<dbReference type="Bgee" id="ENSRNOG00000013110">
    <property type="expression patterns" value="Expressed in ovary and 19 other cell types or tissues"/>
</dbReference>
<dbReference type="GO" id="GO:0004081">
    <property type="term" value="F:bis(5'-nucleosyl)-tetraphosphatase (asymmetrical) activity"/>
    <property type="evidence" value="ECO:0000250"/>
    <property type="project" value="UniProtKB"/>
</dbReference>
<dbReference type="GO" id="GO:0005525">
    <property type="term" value="F:GTP binding"/>
    <property type="evidence" value="ECO:0007669"/>
    <property type="project" value="UniProtKB-KW"/>
</dbReference>
<dbReference type="GO" id="GO:0016787">
    <property type="term" value="F:hydrolase activity"/>
    <property type="evidence" value="ECO:0000304"/>
    <property type="project" value="RGD"/>
</dbReference>
<dbReference type="GO" id="GO:0006167">
    <property type="term" value="P:AMP biosynthetic process"/>
    <property type="evidence" value="ECO:0000318"/>
    <property type="project" value="GO_Central"/>
</dbReference>
<dbReference type="GO" id="GO:0006754">
    <property type="term" value="P:ATP biosynthetic process"/>
    <property type="evidence" value="ECO:0000318"/>
    <property type="project" value="GO_Central"/>
</dbReference>
<dbReference type="CDD" id="cd03428">
    <property type="entry name" value="NUDIX_Ap4A_Nudt2"/>
    <property type="match status" value="1"/>
</dbReference>
<dbReference type="FunFam" id="3.90.79.10:FF:000037">
    <property type="entry name" value="Nudix hydrolase 2"/>
    <property type="match status" value="1"/>
</dbReference>
<dbReference type="Gene3D" id="3.90.79.10">
    <property type="entry name" value="Nucleoside Triphosphate Pyrophosphohydrolase"/>
    <property type="match status" value="1"/>
</dbReference>
<dbReference type="InterPro" id="IPR020476">
    <property type="entry name" value="Nudix_hydrolase"/>
</dbReference>
<dbReference type="InterPro" id="IPR015797">
    <property type="entry name" value="NUDIX_hydrolase-like_dom_sf"/>
</dbReference>
<dbReference type="InterPro" id="IPR020084">
    <property type="entry name" value="NUDIX_hydrolase_CS"/>
</dbReference>
<dbReference type="InterPro" id="IPR000086">
    <property type="entry name" value="NUDIX_hydrolase_dom"/>
</dbReference>
<dbReference type="InterPro" id="IPR051325">
    <property type="entry name" value="Nudix_hydrolase_domain"/>
</dbReference>
<dbReference type="InterPro" id="IPR003565">
    <property type="entry name" value="Tetra_PHTase"/>
</dbReference>
<dbReference type="PANTHER" id="PTHR21340:SF0">
    <property type="entry name" value="BIS(5'-NUCLEOSYL)-TETRAPHOSPHATASE [ASYMMETRICAL]"/>
    <property type="match status" value="1"/>
</dbReference>
<dbReference type="PANTHER" id="PTHR21340">
    <property type="entry name" value="DIADENOSINE 5,5-P1,P4-TETRAPHOSPHATE PYROPHOSPHOHYDROLASE MUTT"/>
    <property type="match status" value="1"/>
</dbReference>
<dbReference type="Pfam" id="PF00293">
    <property type="entry name" value="NUDIX"/>
    <property type="match status" value="1"/>
</dbReference>
<dbReference type="PRINTS" id="PR00502">
    <property type="entry name" value="NUDIXFAMILY"/>
</dbReference>
<dbReference type="PRINTS" id="PR01405">
    <property type="entry name" value="TETRPHPHTASE"/>
</dbReference>
<dbReference type="SUPFAM" id="SSF55811">
    <property type="entry name" value="Nudix"/>
    <property type="match status" value="1"/>
</dbReference>
<dbReference type="PROSITE" id="PS51462">
    <property type="entry name" value="NUDIX"/>
    <property type="match status" value="1"/>
</dbReference>
<dbReference type="PROSITE" id="PS00893">
    <property type="entry name" value="NUDIX_BOX"/>
    <property type="match status" value="1"/>
</dbReference>
<comment type="function">
    <text evidence="2 3">Catalyzes the asymmetric hydrolysis of diadenosine 5',5'''-P1,P4-tetraphosphate (Ap4A) to yield AMP and ATP (By similarity). Exhibits decapping activity towards FAD-capped RNAs and dpCoA-capped RNAs in vitro (By similarity).</text>
</comment>
<comment type="catalytic activity">
    <reaction evidence="2">
        <text>P(1),P(4)-bis(5'-guanosyl) tetraphosphate + H2O = GMP + GTP + 2 H(+)</text>
        <dbReference type="Rhea" id="RHEA:22484"/>
        <dbReference type="ChEBI" id="CHEBI:15377"/>
        <dbReference type="ChEBI" id="CHEBI:15378"/>
        <dbReference type="ChEBI" id="CHEBI:37565"/>
        <dbReference type="ChEBI" id="CHEBI:57553"/>
        <dbReference type="ChEBI" id="CHEBI:58115"/>
        <dbReference type="EC" id="3.6.1.17"/>
    </reaction>
</comment>
<comment type="catalytic activity">
    <reaction evidence="3">
        <text>a 5'-end CoA-ribonucleoside in mRNA + H2O = a 5'-end phospho-adenosine-phospho-ribonucleoside in mRNA + (R)-4'-phosphopantetheine + 2 H(+)</text>
        <dbReference type="Rhea" id="RHEA:67592"/>
        <dbReference type="Rhea" id="RHEA-COMP:15719"/>
        <dbReference type="Rhea" id="RHEA-COMP:17276"/>
        <dbReference type="ChEBI" id="CHEBI:15377"/>
        <dbReference type="ChEBI" id="CHEBI:15378"/>
        <dbReference type="ChEBI" id="CHEBI:61723"/>
        <dbReference type="ChEBI" id="CHEBI:144051"/>
        <dbReference type="ChEBI" id="CHEBI:172371"/>
    </reaction>
    <physiologicalReaction direction="left-to-right" evidence="3">
        <dbReference type="Rhea" id="RHEA:67593"/>
    </physiologicalReaction>
</comment>
<comment type="catalytic activity">
    <reaction evidence="3">
        <text>a 5'-end FAD-phospho-ribonucleoside in mRNA + H2O = a 5'-end phospho-adenosine-phospho-ribonucleoside in mRNA + FMN + 2 H(+)</text>
        <dbReference type="Rhea" id="RHEA:67588"/>
        <dbReference type="Rhea" id="RHEA-COMP:15719"/>
        <dbReference type="Rhea" id="RHEA-COMP:17275"/>
        <dbReference type="ChEBI" id="CHEBI:15377"/>
        <dbReference type="ChEBI" id="CHEBI:15378"/>
        <dbReference type="ChEBI" id="CHEBI:58210"/>
        <dbReference type="ChEBI" id="CHEBI:144051"/>
        <dbReference type="ChEBI" id="CHEBI:172372"/>
    </reaction>
    <physiologicalReaction direction="left-to-right" evidence="3">
        <dbReference type="Rhea" id="RHEA:67589"/>
    </physiologicalReaction>
</comment>
<comment type="cofactor">
    <cofactor evidence="4">
        <name>a divalent metal cation</name>
        <dbReference type="ChEBI" id="CHEBI:60240"/>
    </cofactor>
    <text evidence="4">Divalent metal ions.</text>
</comment>
<comment type="similarity">
    <text evidence="6">Belongs to the Nudix hydrolase family.</text>
</comment>
<evidence type="ECO:0000250" key="1">
    <source>
        <dbReference type="UniProtKB" id="P50583"/>
    </source>
</evidence>
<evidence type="ECO:0000250" key="2">
    <source>
        <dbReference type="UniProtKB" id="P50584"/>
    </source>
</evidence>
<evidence type="ECO:0000250" key="3">
    <source>
        <dbReference type="UniProtKB" id="P56380"/>
    </source>
</evidence>
<evidence type="ECO:0000250" key="4">
    <source>
        <dbReference type="UniProtKB" id="Q9U2M7"/>
    </source>
</evidence>
<evidence type="ECO:0000255" key="5">
    <source>
        <dbReference type="PROSITE-ProRule" id="PRU00794"/>
    </source>
</evidence>
<evidence type="ECO:0000305" key="6"/>
<reference key="1">
    <citation type="journal article" date="2004" name="Genome Res.">
        <title>The status, quality, and expansion of the NIH full-length cDNA project: the Mammalian Gene Collection (MGC).</title>
        <authorList>
            <consortium name="The MGC Project Team"/>
        </authorList>
    </citation>
    <scope>NUCLEOTIDE SEQUENCE [LARGE SCALE MRNA]</scope>
    <source>
        <tissue>Pituitary</tissue>
    </source>
</reference>
<accession>Q6PEC0</accession>
<keyword id="KW-0007">Acetylation</keyword>
<keyword id="KW-0342">GTP-binding</keyword>
<keyword id="KW-0378">Hydrolase</keyword>
<keyword id="KW-0547">Nucleotide-binding</keyword>
<keyword id="KW-1185">Reference proteome</keyword>
<feature type="initiator methionine" description="Removed" evidence="1">
    <location>
        <position position="1"/>
    </location>
</feature>
<feature type="chain" id="PRO_0000057105" description="Bis(5'-nucleosyl)-tetraphosphatase [asymmetrical]">
    <location>
        <begin position="2"/>
        <end position="147"/>
    </location>
</feature>
<feature type="domain" description="Nudix hydrolase" evidence="5">
    <location>
        <begin position="2"/>
        <end position="139"/>
    </location>
</feature>
<feature type="short sequence motif" description="Nudix box">
    <location>
        <begin position="43"/>
        <end position="64"/>
    </location>
</feature>
<feature type="modified residue" description="N-acetylalanine" evidence="1">
    <location>
        <position position="2"/>
    </location>
</feature>